<name>FMT_SHEPC</name>
<proteinExistence type="inferred from homology"/>
<comment type="function">
    <text evidence="1">Attaches a formyl group to the free amino group of methionyl-tRNA(fMet). The formyl group appears to play a dual role in the initiator identity of N-formylmethionyl-tRNA by promoting its recognition by IF2 and preventing the misappropriation of this tRNA by the elongation apparatus.</text>
</comment>
<comment type="catalytic activity">
    <reaction evidence="1">
        <text>L-methionyl-tRNA(fMet) + (6R)-10-formyltetrahydrofolate = N-formyl-L-methionyl-tRNA(fMet) + (6S)-5,6,7,8-tetrahydrofolate + H(+)</text>
        <dbReference type="Rhea" id="RHEA:24380"/>
        <dbReference type="Rhea" id="RHEA-COMP:9952"/>
        <dbReference type="Rhea" id="RHEA-COMP:9953"/>
        <dbReference type="ChEBI" id="CHEBI:15378"/>
        <dbReference type="ChEBI" id="CHEBI:57453"/>
        <dbReference type="ChEBI" id="CHEBI:78530"/>
        <dbReference type="ChEBI" id="CHEBI:78844"/>
        <dbReference type="ChEBI" id="CHEBI:195366"/>
        <dbReference type="EC" id="2.1.2.9"/>
    </reaction>
</comment>
<comment type="similarity">
    <text evidence="1">Belongs to the Fmt family.</text>
</comment>
<protein>
    <recommendedName>
        <fullName evidence="1">Methionyl-tRNA formyltransferase</fullName>
        <ecNumber evidence="1">2.1.2.9</ecNumber>
    </recommendedName>
</protein>
<feature type="chain" id="PRO_1000020157" description="Methionyl-tRNA formyltransferase">
    <location>
        <begin position="1"/>
        <end position="318"/>
    </location>
</feature>
<feature type="binding site" evidence="1">
    <location>
        <begin position="112"/>
        <end position="115"/>
    </location>
    <ligand>
        <name>(6S)-5,6,7,8-tetrahydrofolate</name>
        <dbReference type="ChEBI" id="CHEBI:57453"/>
    </ligand>
</feature>
<sequence length="318" mass="34545">MKSLNIIFAGTPDFAARHLQALLNSQHNVIGVYTQPDRPAGRGKKLTASPVKELAIANNIPVFQPGSLRKEPAQQELAALNADIMVVVAYGLILPKVVLDTPRLGCINVHGSILPRWRGAAPIQRALWAGDKETGVTIMQMDVGLDTGDMLLKTYLPIEDNDTSASLYEKLAEQGPIALLQALEGLTNGTLAAEKQDEALANYAEKLSKEEARLDWNKSAKQLWQEVRAFNPWPVSYFEHQGNTIKVWQAHVSETISTAAPGTIISASKKGIEVATADGVLTLLSMQLPGKNPLNVADILNARGEWFSPNTRLANEAE</sequence>
<accession>A4Y1C6</accession>
<keyword id="KW-0648">Protein biosynthesis</keyword>
<keyword id="KW-0808">Transferase</keyword>
<dbReference type="EC" id="2.1.2.9" evidence="1"/>
<dbReference type="EMBL" id="CP000681">
    <property type="protein sequence ID" value="ABP73759.1"/>
    <property type="molecule type" value="Genomic_DNA"/>
</dbReference>
<dbReference type="SMR" id="A4Y1C6"/>
<dbReference type="STRING" id="319224.Sputcn32_0023"/>
<dbReference type="KEGG" id="spc:Sputcn32_0023"/>
<dbReference type="eggNOG" id="COG0223">
    <property type="taxonomic scope" value="Bacteria"/>
</dbReference>
<dbReference type="HOGENOM" id="CLU_033347_1_2_6"/>
<dbReference type="GO" id="GO:0005829">
    <property type="term" value="C:cytosol"/>
    <property type="evidence" value="ECO:0007669"/>
    <property type="project" value="TreeGrafter"/>
</dbReference>
<dbReference type="GO" id="GO:0004479">
    <property type="term" value="F:methionyl-tRNA formyltransferase activity"/>
    <property type="evidence" value="ECO:0007669"/>
    <property type="project" value="UniProtKB-UniRule"/>
</dbReference>
<dbReference type="CDD" id="cd08646">
    <property type="entry name" value="FMT_core_Met-tRNA-FMT_N"/>
    <property type="match status" value="1"/>
</dbReference>
<dbReference type="CDD" id="cd08704">
    <property type="entry name" value="Met_tRNA_FMT_C"/>
    <property type="match status" value="1"/>
</dbReference>
<dbReference type="FunFam" id="3.40.50.170:FF:000003">
    <property type="entry name" value="Methionyl-tRNA formyltransferase"/>
    <property type="match status" value="1"/>
</dbReference>
<dbReference type="Gene3D" id="3.10.25.10">
    <property type="entry name" value="Formyl transferase, C-terminal domain"/>
    <property type="match status" value="1"/>
</dbReference>
<dbReference type="Gene3D" id="3.40.50.170">
    <property type="entry name" value="Formyl transferase, N-terminal domain"/>
    <property type="match status" value="1"/>
</dbReference>
<dbReference type="HAMAP" id="MF_00182">
    <property type="entry name" value="Formyl_trans"/>
    <property type="match status" value="1"/>
</dbReference>
<dbReference type="InterPro" id="IPR005794">
    <property type="entry name" value="Fmt"/>
</dbReference>
<dbReference type="InterPro" id="IPR005793">
    <property type="entry name" value="Formyl_trans_C"/>
</dbReference>
<dbReference type="InterPro" id="IPR037022">
    <property type="entry name" value="Formyl_trans_C_sf"/>
</dbReference>
<dbReference type="InterPro" id="IPR002376">
    <property type="entry name" value="Formyl_transf_N"/>
</dbReference>
<dbReference type="InterPro" id="IPR036477">
    <property type="entry name" value="Formyl_transf_N_sf"/>
</dbReference>
<dbReference type="InterPro" id="IPR011034">
    <property type="entry name" value="Formyl_transferase-like_C_sf"/>
</dbReference>
<dbReference type="InterPro" id="IPR001555">
    <property type="entry name" value="GART_AS"/>
</dbReference>
<dbReference type="InterPro" id="IPR044135">
    <property type="entry name" value="Met-tRNA-FMT_C"/>
</dbReference>
<dbReference type="InterPro" id="IPR041711">
    <property type="entry name" value="Met-tRNA-FMT_N"/>
</dbReference>
<dbReference type="NCBIfam" id="TIGR00460">
    <property type="entry name" value="fmt"/>
    <property type="match status" value="1"/>
</dbReference>
<dbReference type="PANTHER" id="PTHR11138">
    <property type="entry name" value="METHIONYL-TRNA FORMYLTRANSFERASE"/>
    <property type="match status" value="1"/>
</dbReference>
<dbReference type="PANTHER" id="PTHR11138:SF5">
    <property type="entry name" value="METHIONYL-TRNA FORMYLTRANSFERASE, MITOCHONDRIAL"/>
    <property type="match status" value="1"/>
</dbReference>
<dbReference type="Pfam" id="PF02911">
    <property type="entry name" value="Formyl_trans_C"/>
    <property type="match status" value="1"/>
</dbReference>
<dbReference type="Pfam" id="PF00551">
    <property type="entry name" value="Formyl_trans_N"/>
    <property type="match status" value="1"/>
</dbReference>
<dbReference type="SUPFAM" id="SSF50486">
    <property type="entry name" value="FMT C-terminal domain-like"/>
    <property type="match status" value="1"/>
</dbReference>
<dbReference type="SUPFAM" id="SSF53328">
    <property type="entry name" value="Formyltransferase"/>
    <property type="match status" value="1"/>
</dbReference>
<dbReference type="PROSITE" id="PS00373">
    <property type="entry name" value="GART"/>
    <property type="match status" value="1"/>
</dbReference>
<organism>
    <name type="scientific">Shewanella putrefaciens (strain CN-32 / ATCC BAA-453)</name>
    <dbReference type="NCBI Taxonomy" id="319224"/>
    <lineage>
        <taxon>Bacteria</taxon>
        <taxon>Pseudomonadati</taxon>
        <taxon>Pseudomonadota</taxon>
        <taxon>Gammaproteobacteria</taxon>
        <taxon>Alteromonadales</taxon>
        <taxon>Shewanellaceae</taxon>
        <taxon>Shewanella</taxon>
    </lineage>
</organism>
<evidence type="ECO:0000255" key="1">
    <source>
        <dbReference type="HAMAP-Rule" id="MF_00182"/>
    </source>
</evidence>
<gene>
    <name evidence="1" type="primary">fmt</name>
    <name type="ordered locus">Sputcn32_0023</name>
</gene>
<reference key="1">
    <citation type="submission" date="2007-04" db="EMBL/GenBank/DDBJ databases">
        <title>Complete sequence of Shewanella putrefaciens CN-32.</title>
        <authorList>
            <consortium name="US DOE Joint Genome Institute"/>
            <person name="Copeland A."/>
            <person name="Lucas S."/>
            <person name="Lapidus A."/>
            <person name="Barry K."/>
            <person name="Detter J.C."/>
            <person name="Glavina del Rio T."/>
            <person name="Hammon N."/>
            <person name="Israni S."/>
            <person name="Dalin E."/>
            <person name="Tice H."/>
            <person name="Pitluck S."/>
            <person name="Chain P."/>
            <person name="Malfatti S."/>
            <person name="Shin M."/>
            <person name="Vergez L."/>
            <person name="Schmutz J."/>
            <person name="Larimer F."/>
            <person name="Land M."/>
            <person name="Hauser L."/>
            <person name="Kyrpides N."/>
            <person name="Mikhailova N."/>
            <person name="Romine M.F."/>
            <person name="Fredrickson J."/>
            <person name="Tiedje J."/>
            <person name="Richardson P."/>
        </authorList>
    </citation>
    <scope>NUCLEOTIDE SEQUENCE [LARGE SCALE GENOMIC DNA]</scope>
    <source>
        <strain>CN-32 / ATCC BAA-453</strain>
    </source>
</reference>